<feature type="chain" id="PRO_1000120675" description="Small ribosomal subunit protein bS21">
    <location>
        <begin position="1"/>
        <end position="69"/>
    </location>
</feature>
<keyword id="KW-0687">Ribonucleoprotein</keyword>
<keyword id="KW-0689">Ribosomal protein</keyword>
<accession>B2S3Z7</accession>
<organism>
    <name type="scientific">Treponema pallidum subsp. pallidum (strain SS14)</name>
    <dbReference type="NCBI Taxonomy" id="455434"/>
    <lineage>
        <taxon>Bacteria</taxon>
        <taxon>Pseudomonadati</taxon>
        <taxon>Spirochaetota</taxon>
        <taxon>Spirochaetia</taxon>
        <taxon>Spirochaetales</taxon>
        <taxon>Treponemataceae</taxon>
        <taxon>Treponema</taxon>
    </lineage>
</organism>
<proteinExistence type="inferred from homology"/>
<reference key="1">
    <citation type="journal article" date="2008" name="BMC Microbiol.">
        <title>Complete genome sequence of Treponema pallidum ssp. pallidum strain SS14 determined with oligonucleotide arrays.</title>
        <authorList>
            <person name="Matejkova P."/>
            <person name="Strouhal M."/>
            <person name="Smajs D."/>
            <person name="Norris S.J."/>
            <person name="Palzkill T."/>
            <person name="Petrosino J.F."/>
            <person name="Sodergren E."/>
            <person name="Norton J.E."/>
            <person name="Singh J."/>
            <person name="Richmond T.A."/>
            <person name="Molla M.N."/>
            <person name="Albert T.J."/>
            <person name="Weinstock G.M."/>
        </authorList>
    </citation>
    <scope>NUCLEOTIDE SEQUENCE [LARGE SCALE GENOMIC DNA]</scope>
    <source>
        <strain>SS14</strain>
    </source>
</reference>
<dbReference type="EMBL" id="CP000805">
    <property type="protein sequence ID" value="ACD71176.1"/>
    <property type="molecule type" value="Genomic_DNA"/>
</dbReference>
<dbReference type="RefSeq" id="WP_010882203.1">
    <property type="nucleotide sequence ID" value="NC_021508.1"/>
</dbReference>
<dbReference type="SMR" id="B2S3Z7"/>
<dbReference type="GeneID" id="93876525"/>
<dbReference type="KEGG" id="tpp:TPASS_0758"/>
<dbReference type="PATRIC" id="fig|455434.6.peg.747"/>
<dbReference type="Proteomes" id="UP000001202">
    <property type="component" value="Chromosome"/>
</dbReference>
<dbReference type="GO" id="GO:1990904">
    <property type="term" value="C:ribonucleoprotein complex"/>
    <property type="evidence" value="ECO:0007669"/>
    <property type="project" value="UniProtKB-KW"/>
</dbReference>
<dbReference type="GO" id="GO:0005840">
    <property type="term" value="C:ribosome"/>
    <property type="evidence" value="ECO:0007669"/>
    <property type="project" value="UniProtKB-KW"/>
</dbReference>
<dbReference type="GO" id="GO:0003735">
    <property type="term" value="F:structural constituent of ribosome"/>
    <property type="evidence" value="ECO:0007669"/>
    <property type="project" value="InterPro"/>
</dbReference>
<dbReference type="GO" id="GO:0006412">
    <property type="term" value="P:translation"/>
    <property type="evidence" value="ECO:0007669"/>
    <property type="project" value="UniProtKB-UniRule"/>
</dbReference>
<dbReference type="Gene3D" id="1.20.5.1150">
    <property type="entry name" value="Ribosomal protein S8"/>
    <property type="match status" value="1"/>
</dbReference>
<dbReference type="HAMAP" id="MF_00358">
    <property type="entry name" value="Ribosomal_bS21"/>
    <property type="match status" value="1"/>
</dbReference>
<dbReference type="InterPro" id="IPR001911">
    <property type="entry name" value="Ribosomal_bS21"/>
</dbReference>
<dbReference type="InterPro" id="IPR018278">
    <property type="entry name" value="Ribosomal_bS21_CS"/>
</dbReference>
<dbReference type="InterPro" id="IPR038380">
    <property type="entry name" value="Ribosomal_bS21_sf"/>
</dbReference>
<dbReference type="NCBIfam" id="TIGR00030">
    <property type="entry name" value="S21p"/>
    <property type="match status" value="1"/>
</dbReference>
<dbReference type="PANTHER" id="PTHR21109">
    <property type="entry name" value="MITOCHONDRIAL 28S RIBOSOMAL PROTEIN S21"/>
    <property type="match status" value="1"/>
</dbReference>
<dbReference type="PANTHER" id="PTHR21109:SF22">
    <property type="entry name" value="SMALL RIBOSOMAL SUBUNIT PROTEIN BS21"/>
    <property type="match status" value="1"/>
</dbReference>
<dbReference type="Pfam" id="PF01165">
    <property type="entry name" value="Ribosomal_S21"/>
    <property type="match status" value="1"/>
</dbReference>
<dbReference type="PRINTS" id="PR00976">
    <property type="entry name" value="RIBOSOMALS21"/>
</dbReference>
<dbReference type="PROSITE" id="PS01181">
    <property type="entry name" value="RIBOSOMAL_S21"/>
    <property type="match status" value="1"/>
</dbReference>
<gene>
    <name evidence="1" type="primary">rpsU</name>
    <name type="ordered locus">TPASS_0758</name>
</gene>
<sequence length="69" mass="8406">MAHITVDDSENLEKAIKRFKRQVEKEGIIREWKKKEFYEKPSTLLNRKKKALRRKLMKKGRKVSDSRLY</sequence>
<comment type="similarity">
    <text evidence="1">Belongs to the bacterial ribosomal protein bS21 family.</text>
</comment>
<name>RS21_TREPS</name>
<evidence type="ECO:0000255" key="1">
    <source>
        <dbReference type="HAMAP-Rule" id="MF_00358"/>
    </source>
</evidence>
<evidence type="ECO:0000305" key="2"/>
<protein>
    <recommendedName>
        <fullName evidence="1">Small ribosomal subunit protein bS21</fullName>
    </recommendedName>
    <alternativeName>
        <fullName evidence="2">30S ribosomal protein S21</fullName>
    </alternativeName>
</protein>